<feature type="initiator methionine" description="Removed" evidence="5">
    <location>
        <position position="1"/>
    </location>
</feature>
<feature type="chain" id="PRO_0000216951" description="Fructose-bisphosphate aldolase C">
    <location>
        <begin position="2"/>
        <end position="363"/>
    </location>
</feature>
<feature type="active site" description="Proton acceptor" evidence="1">
    <location>
        <position position="188"/>
    </location>
</feature>
<feature type="active site" description="Schiff-base intermediate with dihydroxyacetone-P">
    <location>
        <position position="230"/>
    </location>
</feature>
<feature type="binding site">
    <location>
        <position position="56"/>
    </location>
    <ligand>
        <name>substrate</name>
    </ligand>
</feature>
<feature type="binding site">
    <location>
        <position position="147"/>
    </location>
    <ligand>
        <name>substrate</name>
    </ligand>
</feature>
<feature type="site" description="Necessary for preference for fructose 1,6-bisphosphate over fructose 1-phosphate">
    <location>
        <position position="363"/>
    </location>
</feature>
<feature type="modified residue" description="Phosphotyrosine" evidence="2">
    <location>
        <position position="5"/>
    </location>
</feature>
<feature type="modified residue" description="Phosphoserine" evidence="7">
    <location>
        <position position="36"/>
    </location>
</feature>
<feature type="modified residue" description="Phosphoserine" evidence="7">
    <location>
        <position position="39"/>
    </location>
</feature>
<feature type="modified residue" description="Phosphoserine" evidence="3">
    <location>
        <position position="45"/>
    </location>
</feature>
<feature type="modified residue" description="N6-acetyllysine" evidence="3">
    <location>
        <position position="111"/>
    </location>
</feature>
<feature type="sequence conflict" description="In Ref. 2; CAA30044 and 6; CAA28889." evidence="6" ref="2 6">
    <original>LAA</original>
    <variation>ACS</variation>
    <location>
        <begin position="337"/>
        <end position="339"/>
    </location>
</feature>
<dbReference type="EC" id="4.1.2.13"/>
<dbReference type="EMBL" id="M63656">
    <property type="protein sequence ID" value="AAA40717.1"/>
    <property type="molecule type" value="Genomic_DNA"/>
</dbReference>
<dbReference type="EMBL" id="X06984">
    <property type="protein sequence ID" value="CAA30044.1"/>
    <property type="molecule type" value="mRNA"/>
</dbReference>
<dbReference type="EMBL" id="AB017483">
    <property type="protein sequence ID" value="BAA75659.1"/>
    <property type="molecule type" value="Genomic_DNA"/>
</dbReference>
<dbReference type="EMBL" id="BC099749">
    <property type="protein sequence ID" value="AAH99749.1"/>
    <property type="molecule type" value="mRNA"/>
</dbReference>
<dbReference type="EMBL" id="X05277">
    <property type="protein sequence ID" value="CAA28889.1"/>
    <property type="molecule type" value="mRNA"/>
</dbReference>
<dbReference type="PIR" id="S00326">
    <property type="entry name" value="ADRTC"/>
</dbReference>
<dbReference type="RefSeq" id="NP_036629.1">
    <property type="nucleotide sequence ID" value="NM_012497.1"/>
</dbReference>
<dbReference type="SMR" id="P09117"/>
<dbReference type="BioGRID" id="246381">
    <property type="interactions" value="5"/>
</dbReference>
<dbReference type="FunCoup" id="P09117">
    <property type="interactions" value="1495"/>
</dbReference>
<dbReference type="IntAct" id="P09117">
    <property type="interactions" value="2"/>
</dbReference>
<dbReference type="MINT" id="P09117"/>
<dbReference type="STRING" id="10116.ENSRNOP00000072735"/>
<dbReference type="GlyGen" id="P09117">
    <property type="glycosylation" value="2 sites, 1 O-linked glycan (1 site)"/>
</dbReference>
<dbReference type="iPTMnet" id="P09117"/>
<dbReference type="PhosphoSitePlus" id="P09117"/>
<dbReference type="SwissPalm" id="P09117"/>
<dbReference type="jPOST" id="P09117"/>
<dbReference type="PaxDb" id="10116-ENSRNOP00000015535"/>
<dbReference type="Ensembl" id="ENSRNOT00000015535.9">
    <property type="protein sequence ID" value="ENSRNOP00000015535.4"/>
    <property type="gene ID" value="ENSRNOG00000011452.9"/>
</dbReference>
<dbReference type="GeneID" id="24191"/>
<dbReference type="KEGG" id="rno:24191"/>
<dbReference type="AGR" id="RGD:2091"/>
<dbReference type="CTD" id="230"/>
<dbReference type="RGD" id="2091">
    <property type="gene designation" value="Aldoc"/>
</dbReference>
<dbReference type="eggNOG" id="KOG1557">
    <property type="taxonomic scope" value="Eukaryota"/>
</dbReference>
<dbReference type="GeneTree" id="ENSGT00950000182987"/>
<dbReference type="HOGENOM" id="CLU_031243_0_0_1"/>
<dbReference type="InParanoid" id="P09117"/>
<dbReference type="OMA" id="GDAMQKW"/>
<dbReference type="OrthoDB" id="6664at9989"/>
<dbReference type="PhylomeDB" id="P09117"/>
<dbReference type="TreeFam" id="TF314203"/>
<dbReference type="Reactome" id="R-RNO-6798695">
    <property type="pathway name" value="Neutrophil degranulation"/>
</dbReference>
<dbReference type="Reactome" id="R-RNO-70171">
    <property type="pathway name" value="Glycolysis"/>
</dbReference>
<dbReference type="Reactome" id="R-RNO-70263">
    <property type="pathway name" value="Gluconeogenesis"/>
</dbReference>
<dbReference type="SABIO-RK" id="P09117"/>
<dbReference type="UniPathway" id="UPA00109">
    <property type="reaction ID" value="UER00183"/>
</dbReference>
<dbReference type="PRO" id="PR:P09117"/>
<dbReference type="Proteomes" id="UP000002494">
    <property type="component" value="Chromosome 10"/>
</dbReference>
<dbReference type="Bgee" id="ENSRNOG00000011452">
    <property type="expression patterns" value="Expressed in cerebellum and 20 other cell types or tissues"/>
</dbReference>
<dbReference type="ExpressionAtlas" id="P09117">
    <property type="expression patterns" value="baseline and differential"/>
</dbReference>
<dbReference type="GO" id="GO:0030424">
    <property type="term" value="C:axon"/>
    <property type="evidence" value="ECO:0000314"/>
    <property type="project" value="RGD"/>
</dbReference>
<dbReference type="GO" id="GO:0005829">
    <property type="term" value="C:cytosol"/>
    <property type="evidence" value="ECO:0000318"/>
    <property type="project" value="GO_Central"/>
</dbReference>
<dbReference type="GO" id="GO:0099524">
    <property type="term" value="C:postsynaptic cytosol"/>
    <property type="evidence" value="ECO:0000314"/>
    <property type="project" value="SynGO"/>
</dbReference>
<dbReference type="GO" id="GO:0008092">
    <property type="term" value="F:cytoskeletal protein binding"/>
    <property type="evidence" value="ECO:0000266"/>
    <property type="project" value="RGD"/>
</dbReference>
<dbReference type="GO" id="GO:0004332">
    <property type="term" value="F:fructose-bisphosphate aldolase activity"/>
    <property type="evidence" value="ECO:0000314"/>
    <property type="project" value="RGD"/>
</dbReference>
<dbReference type="GO" id="GO:0042802">
    <property type="term" value="F:identical protein binding"/>
    <property type="evidence" value="ECO:0000353"/>
    <property type="project" value="RGD"/>
</dbReference>
<dbReference type="GO" id="GO:0044877">
    <property type="term" value="F:protein-containing complex binding"/>
    <property type="evidence" value="ECO:0000314"/>
    <property type="project" value="RGD"/>
</dbReference>
<dbReference type="GO" id="GO:0031100">
    <property type="term" value="P:animal organ regeneration"/>
    <property type="evidence" value="ECO:0000270"/>
    <property type="project" value="RGD"/>
</dbReference>
<dbReference type="GO" id="GO:0030855">
    <property type="term" value="P:epithelial cell differentiation"/>
    <property type="evidence" value="ECO:0000266"/>
    <property type="project" value="RGD"/>
</dbReference>
<dbReference type="GO" id="GO:0030388">
    <property type="term" value="P:fructose 1,6-bisphosphate metabolic process"/>
    <property type="evidence" value="ECO:0000250"/>
    <property type="project" value="UniProtKB"/>
</dbReference>
<dbReference type="GO" id="GO:0006094">
    <property type="term" value="P:gluconeogenesis"/>
    <property type="evidence" value="ECO:0000266"/>
    <property type="project" value="RGD"/>
</dbReference>
<dbReference type="GO" id="GO:0006096">
    <property type="term" value="P:glycolytic process"/>
    <property type="evidence" value="ECO:0000318"/>
    <property type="project" value="GO_Central"/>
</dbReference>
<dbReference type="GO" id="GO:0001666">
    <property type="term" value="P:response to hypoxia"/>
    <property type="evidence" value="ECO:0000270"/>
    <property type="project" value="RGD"/>
</dbReference>
<dbReference type="CDD" id="cd00948">
    <property type="entry name" value="FBP_aldolase_I_a"/>
    <property type="match status" value="1"/>
</dbReference>
<dbReference type="FunFam" id="3.20.20.70:FF:000021">
    <property type="entry name" value="Fructose-bisphosphate aldolase"/>
    <property type="match status" value="1"/>
</dbReference>
<dbReference type="Gene3D" id="3.20.20.70">
    <property type="entry name" value="Aldolase class I"/>
    <property type="match status" value="1"/>
</dbReference>
<dbReference type="InterPro" id="IPR029768">
    <property type="entry name" value="Aldolase_I_AS"/>
</dbReference>
<dbReference type="InterPro" id="IPR013785">
    <property type="entry name" value="Aldolase_TIM"/>
</dbReference>
<dbReference type="InterPro" id="IPR000741">
    <property type="entry name" value="FBA_I"/>
</dbReference>
<dbReference type="NCBIfam" id="NF033379">
    <property type="entry name" value="FrucBisAld_I"/>
    <property type="match status" value="1"/>
</dbReference>
<dbReference type="PANTHER" id="PTHR11627">
    <property type="entry name" value="FRUCTOSE-BISPHOSPHATE ALDOLASE"/>
    <property type="match status" value="1"/>
</dbReference>
<dbReference type="Pfam" id="PF00274">
    <property type="entry name" value="Glycolytic"/>
    <property type="match status" value="1"/>
</dbReference>
<dbReference type="SUPFAM" id="SSF51569">
    <property type="entry name" value="Aldolase"/>
    <property type="match status" value="1"/>
</dbReference>
<dbReference type="PROSITE" id="PS00158">
    <property type="entry name" value="ALDOLASE_CLASS_I"/>
    <property type="match status" value="1"/>
</dbReference>
<proteinExistence type="evidence at protein level"/>
<keyword id="KW-0007">Acetylation</keyword>
<keyword id="KW-0903">Direct protein sequencing</keyword>
<keyword id="KW-0324">Glycolysis</keyword>
<keyword id="KW-0456">Lyase</keyword>
<keyword id="KW-0597">Phosphoprotein</keyword>
<keyword id="KW-1185">Reference proteome</keyword>
<keyword id="KW-0704">Schiff base</keyword>
<organism>
    <name type="scientific">Rattus norvegicus</name>
    <name type="common">Rat</name>
    <dbReference type="NCBI Taxonomy" id="10116"/>
    <lineage>
        <taxon>Eukaryota</taxon>
        <taxon>Metazoa</taxon>
        <taxon>Chordata</taxon>
        <taxon>Craniata</taxon>
        <taxon>Vertebrata</taxon>
        <taxon>Euteleostomi</taxon>
        <taxon>Mammalia</taxon>
        <taxon>Eutheria</taxon>
        <taxon>Euarchontoglires</taxon>
        <taxon>Glires</taxon>
        <taxon>Rodentia</taxon>
        <taxon>Myomorpha</taxon>
        <taxon>Muroidea</taxon>
        <taxon>Muridae</taxon>
        <taxon>Murinae</taxon>
        <taxon>Rattus</taxon>
    </lineage>
</organism>
<gene>
    <name type="primary">Aldoc</name>
</gene>
<accession>P09117</accession>
<accession>Q54AI4</accession>
<accession>Q63037</accession>
<name>ALDOC_RAT</name>
<evidence type="ECO:0000250" key="1"/>
<evidence type="ECO:0000250" key="2">
    <source>
        <dbReference type="UniProtKB" id="P05065"/>
    </source>
</evidence>
<evidence type="ECO:0000250" key="3">
    <source>
        <dbReference type="UniProtKB" id="P09972"/>
    </source>
</evidence>
<evidence type="ECO:0000269" key="4">
    <source>
    </source>
</evidence>
<evidence type="ECO:0000269" key="5">
    <source ref="5"/>
</evidence>
<evidence type="ECO:0000305" key="6"/>
<evidence type="ECO:0007744" key="7">
    <source>
    </source>
</evidence>
<reference key="1">
    <citation type="journal article" date="1991" name="Biochem. Biophys. Res. Commun.">
        <title>The structure of the brain-specific rat aldolase C gene and its regional expression.</title>
        <authorList>
            <person name="Mukai T."/>
            <person name="Yatsuki H."/>
            <person name="Masuko S."/>
            <person name="Arai Y."/>
            <person name="Joh K."/>
            <person name="Hori K."/>
        </authorList>
    </citation>
    <scope>NUCLEOTIDE SEQUENCE [GENOMIC DNA]</scope>
    <source>
        <tissue>Brain</tissue>
    </source>
</reference>
<reference key="2">
    <citation type="journal article" date="1988" name="Eur. J. Biochem.">
        <title>The structure of brain-specific rat aldolase C mRNA and the evolution of aldolase isozyme genes.</title>
        <authorList>
            <person name="Kukita A."/>
            <person name="Mukai T."/>
            <person name="Miyata T."/>
            <person name="Hori K."/>
        </authorList>
    </citation>
    <scope>NUCLEOTIDE SEQUENCE [MRNA]</scope>
    <source>
        <tissue>Brain</tissue>
    </source>
</reference>
<reference key="3">
    <citation type="journal article" date="1997" name="J. Biochem.">
        <title>The first exon of the rat aldolase C gene is essential for restoring the chromatin structure in transgenic mice.</title>
        <authorList>
            <person name="Arai Y."/>
            <person name="Sugama T."/>
            <person name="Hashido K."/>
            <person name="Ohishi S."/>
            <person name="Mukai T."/>
        </authorList>
    </citation>
    <scope>NUCLEOTIDE SEQUENCE [GENOMIC DNA]</scope>
</reference>
<reference key="4">
    <citation type="journal article" date="2004" name="Genome Res.">
        <title>The status, quality, and expansion of the NIH full-length cDNA project: the Mammalian Gene Collection (MGC).</title>
        <authorList>
            <consortium name="The MGC Project Team"/>
        </authorList>
    </citation>
    <scope>NUCLEOTIDE SEQUENCE [LARGE SCALE MRNA]</scope>
    <source>
        <tissue>Prostate</tissue>
    </source>
</reference>
<reference key="5">
    <citation type="submission" date="2007-07" db="UniProtKB">
        <authorList>
            <person name="Lubec G."/>
            <person name="Afjehi-Sadat L."/>
            <person name="Kang S.U."/>
        </authorList>
    </citation>
    <scope>PROTEIN SEQUENCE OF 2-13; 15-22; 61-69; 73-96; 112-134; 158-215; 244-258; 260-289; 305-315; 319-330 AND 343-363</scope>
    <scope>IDENTIFICATION BY MASS SPECTROMETRY</scope>
    <source>
        <strain>Sprague-Dawley</strain>
        <tissue>Brain</tissue>
        <tissue>Spinal cord</tissue>
    </source>
</reference>
<reference key="6">
    <citation type="journal article" date="1987" name="Eur. J. Biochem.">
        <title>Molecular cloning and expression of rat aldolase C messenger RNA during development and hepatocarcinogenesis.</title>
        <authorList>
            <person name="Skala H."/>
            <person name="Vibert M."/>
            <person name="Lamas E."/>
            <person name="Maire P."/>
            <person name="Schweighoffer F."/>
            <person name="Kahn A."/>
        </authorList>
    </citation>
    <scope>NUCLEOTIDE SEQUENCE [MRNA] OF 251-363</scope>
    <scope>TISSUE SPECIFICITY</scope>
    <scope>DEVELOPMENTAL STAGE</scope>
    <source>
        <strain>Wistar</strain>
        <tissue>Brain</tissue>
    </source>
</reference>
<reference key="7">
    <citation type="journal article" date="2012" name="Nat. Commun.">
        <title>Quantitative maps of protein phosphorylation sites across 14 different rat organs and tissues.</title>
        <authorList>
            <person name="Lundby A."/>
            <person name="Secher A."/>
            <person name="Lage K."/>
            <person name="Nordsborg N.B."/>
            <person name="Dmytriyev A."/>
            <person name="Lundby C."/>
            <person name="Olsen J.V."/>
        </authorList>
    </citation>
    <scope>PHOSPHORYLATION [LARGE SCALE ANALYSIS] AT SER-36 AND SER-39</scope>
    <scope>IDENTIFICATION BY MASS SPECTROMETRY [LARGE SCALE ANALYSIS]</scope>
</reference>
<comment type="catalytic activity">
    <reaction>
        <text>beta-D-fructose 1,6-bisphosphate = D-glyceraldehyde 3-phosphate + dihydroxyacetone phosphate</text>
        <dbReference type="Rhea" id="RHEA:14729"/>
        <dbReference type="ChEBI" id="CHEBI:32966"/>
        <dbReference type="ChEBI" id="CHEBI:57642"/>
        <dbReference type="ChEBI" id="CHEBI:59776"/>
        <dbReference type="EC" id="4.1.2.13"/>
    </reaction>
</comment>
<comment type="pathway">
    <text>Carbohydrate degradation; glycolysis; D-glyceraldehyde 3-phosphate and glycerone phosphate from D-glucose: step 4/4.</text>
</comment>
<comment type="subunit">
    <text evidence="1">Homotetramer. Interacts with ATP6V1E1 (By similarity).</text>
</comment>
<comment type="tissue specificity">
    <text evidence="4">High expression in the adult brain.</text>
</comment>
<comment type="developmental stage">
    <text evidence="4">Detected at low concentration in practically all the fetal tissues and its expression markedly and rapidly decreased after birth.</text>
</comment>
<comment type="miscellaneous">
    <text>In vertebrates, three forms of this ubiquitous glycolytic enzyme are found, aldolase A in muscle, aldolase B in liver and aldolase C in brain.</text>
</comment>
<comment type="similarity">
    <text evidence="6">Belongs to the class I fructose-bisphosphate aldolase family.</text>
</comment>
<sequence>MPHSYPALSAEQKKELSDIALRIVAPGKGILAADESVGSMAKRLSQIGVENTEENRRLYRQVLFSADDRVKKCIGGVIFFHETLYQKDDNGVPFVRTIQEKGILVGIKVDKGVVPLAGTDGETTTQGLDGLLERCAQYKKDGADFAKWRCVLKISDRTPSALAILENANVLARYASICQQNGIVPIVEPEILPDGDHDLKRCQFVTEKVLAAVYKALSDHHVYLEGTLLKPNMVTPGHACPIKYSPEEIAMATVTALRRTVPPAVPGVTFLSGGQSEEEASLNLNAINRCSLPRPWALTFSYGRALQASALSAWRGQRDNAGAATEEFIKRAEMNGLAAQGKYEGSGDGGAAAQSLYVANHAY</sequence>
<protein>
    <recommendedName>
        <fullName>Fructose-bisphosphate aldolase C</fullName>
        <ecNumber>4.1.2.13</ecNumber>
    </recommendedName>
    <alternativeName>
        <fullName>Brain-type aldolase</fullName>
    </alternativeName>
</protein>